<protein>
    <recommendedName>
        <fullName>Ribonuclease 8</fullName>
        <shortName>RNase 8</shortName>
        <ecNumber>3.1.27.-</ecNumber>
    </recommendedName>
</protein>
<gene>
    <name type="primary">RNASE8</name>
</gene>
<dbReference type="EC" id="3.1.27.-"/>
<dbReference type="EMBL" id="AF473854">
    <property type="protein sequence ID" value="AAL89644.1"/>
    <property type="molecule type" value="Genomic_DNA"/>
</dbReference>
<dbReference type="EMBL" id="CH471078">
    <property type="protein sequence ID" value="EAW66417.1"/>
    <property type="molecule type" value="Genomic_DNA"/>
</dbReference>
<dbReference type="EMBL" id="BC137537">
    <property type="protein sequence ID" value="AAI37538.1"/>
    <property type="molecule type" value="mRNA"/>
</dbReference>
<dbReference type="EMBL" id="BC137538">
    <property type="protein sequence ID" value="AAI37539.1"/>
    <property type="molecule type" value="mRNA"/>
</dbReference>
<dbReference type="CCDS" id="CCDS9567.1"/>
<dbReference type="RefSeq" id="NP_612204.1">
    <property type="nucleotide sequence ID" value="NM_138331.2"/>
</dbReference>
<dbReference type="SMR" id="Q8TDE3"/>
<dbReference type="FunCoup" id="Q8TDE3">
    <property type="interactions" value="192"/>
</dbReference>
<dbReference type="STRING" id="9606.ENSP00000311398"/>
<dbReference type="iPTMnet" id="Q8TDE3"/>
<dbReference type="PhosphoSitePlus" id="Q8TDE3"/>
<dbReference type="BioMuta" id="RNASE8"/>
<dbReference type="DMDM" id="23822095"/>
<dbReference type="MassIVE" id="Q8TDE3"/>
<dbReference type="PaxDb" id="9606-ENSP00000311398"/>
<dbReference type="PeptideAtlas" id="Q8TDE3"/>
<dbReference type="Antibodypedia" id="49755">
    <property type="antibodies" value="73 antibodies from 13 providers"/>
</dbReference>
<dbReference type="DNASU" id="122665"/>
<dbReference type="Ensembl" id="ENST00000308227.2">
    <property type="protein sequence ID" value="ENSP00000311398.2"/>
    <property type="gene ID" value="ENSG00000173431.2"/>
</dbReference>
<dbReference type="GeneID" id="122665"/>
<dbReference type="KEGG" id="hsa:122665"/>
<dbReference type="MANE-Select" id="ENST00000308227.2">
    <property type="protein sequence ID" value="ENSP00000311398.2"/>
    <property type="RefSeq nucleotide sequence ID" value="NM_138331.2"/>
    <property type="RefSeq protein sequence ID" value="NP_612204.1"/>
</dbReference>
<dbReference type="UCSC" id="uc010tlm.3">
    <property type="organism name" value="human"/>
</dbReference>
<dbReference type="AGR" id="HGNC:19277"/>
<dbReference type="CTD" id="122665"/>
<dbReference type="GeneCards" id="RNASE8"/>
<dbReference type="HGNC" id="HGNC:19277">
    <property type="gene designation" value="RNASE8"/>
</dbReference>
<dbReference type="HPA" id="ENSG00000173431">
    <property type="expression patterns" value="Tissue enriched (salivary)"/>
</dbReference>
<dbReference type="MIM" id="612485">
    <property type="type" value="gene"/>
</dbReference>
<dbReference type="neXtProt" id="NX_Q8TDE3"/>
<dbReference type="OpenTargets" id="ENSG00000173431"/>
<dbReference type="PharmGKB" id="PA134930162"/>
<dbReference type="VEuPathDB" id="HostDB:ENSG00000173431"/>
<dbReference type="eggNOG" id="ENOG502TDZ3">
    <property type="taxonomic scope" value="Eukaryota"/>
</dbReference>
<dbReference type="GeneTree" id="ENSGT00940000164606"/>
<dbReference type="HOGENOM" id="CLU_117006_0_1_1"/>
<dbReference type="InParanoid" id="Q8TDE3"/>
<dbReference type="OMA" id="RAGCCPL"/>
<dbReference type="OrthoDB" id="9450033at2759"/>
<dbReference type="PAN-GO" id="Q8TDE3">
    <property type="GO annotations" value="6 GO annotations based on evolutionary models"/>
</dbReference>
<dbReference type="PhylomeDB" id="Q8TDE3"/>
<dbReference type="TreeFam" id="TF333393"/>
<dbReference type="PathwayCommons" id="Q8TDE3"/>
<dbReference type="Reactome" id="R-HSA-6803157">
    <property type="pathway name" value="Antimicrobial peptides"/>
</dbReference>
<dbReference type="BioGRID-ORCS" id="122665">
    <property type="hits" value="9 hits in 1127 CRISPR screens"/>
</dbReference>
<dbReference type="GenomeRNAi" id="122665"/>
<dbReference type="Pharos" id="Q8TDE3">
    <property type="development level" value="Tbio"/>
</dbReference>
<dbReference type="PRO" id="PR:Q8TDE3"/>
<dbReference type="Proteomes" id="UP000005640">
    <property type="component" value="Chromosome 14"/>
</dbReference>
<dbReference type="RNAct" id="Q8TDE3">
    <property type="molecule type" value="protein"/>
</dbReference>
<dbReference type="Bgee" id="ENSG00000173431">
    <property type="expression patterns" value="Expressed in primordial germ cell in gonad and 13 other cell types or tissues"/>
</dbReference>
<dbReference type="GO" id="GO:0005615">
    <property type="term" value="C:extracellular space"/>
    <property type="evidence" value="ECO:0000318"/>
    <property type="project" value="GO_Central"/>
</dbReference>
<dbReference type="GO" id="GO:0003676">
    <property type="term" value="F:nucleic acid binding"/>
    <property type="evidence" value="ECO:0007669"/>
    <property type="project" value="InterPro"/>
</dbReference>
<dbReference type="GO" id="GO:0004522">
    <property type="term" value="F:ribonuclease A activity"/>
    <property type="evidence" value="ECO:0000314"/>
    <property type="project" value="UniProtKB"/>
</dbReference>
<dbReference type="GO" id="GO:0004540">
    <property type="term" value="F:RNA nuclease activity"/>
    <property type="evidence" value="ECO:0000318"/>
    <property type="project" value="GO_Central"/>
</dbReference>
<dbReference type="GO" id="GO:0061760">
    <property type="term" value="P:antifungal innate immune response"/>
    <property type="evidence" value="ECO:0000314"/>
    <property type="project" value="UniProtKB"/>
</dbReference>
<dbReference type="GO" id="GO:0050832">
    <property type="term" value="P:defense response to fungus"/>
    <property type="evidence" value="ECO:0000318"/>
    <property type="project" value="GO_Central"/>
</dbReference>
<dbReference type="GO" id="GO:0050829">
    <property type="term" value="P:defense response to Gram-negative bacterium"/>
    <property type="evidence" value="ECO:0000314"/>
    <property type="project" value="UniProtKB"/>
</dbReference>
<dbReference type="GO" id="GO:0050830">
    <property type="term" value="P:defense response to Gram-positive bacterium"/>
    <property type="evidence" value="ECO:0000314"/>
    <property type="project" value="UniProtKB"/>
</dbReference>
<dbReference type="GO" id="GO:0045087">
    <property type="term" value="P:innate immune response"/>
    <property type="evidence" value="ECO:0000315"/>
    <property type="project" value="UniProtKB"/>
</dbReference>
<dbReference type="CDD" id="cd06265">
    <property type="entry name" value="RNase_A_canonical"/>
    <property type="match status" value="1"/>
</dbReference>
<dbReference type="FunFam" id="3.10.130.10:FF:000001">
    <property type="entry name" value="Ribonuclease pancreatic"/>
    <property type="match status" value="1"/>
</dbReference>
<dbReference type="Gene3D" id="3.10.130.10">
    <property type="entry name" value="Ribonuclease A-like domain"/>
    <property type="match status" value="1"/>
</dbReference>
<dbReference type="InterPro" id="IPR001427">
    <property type="entry name" value="RNaseA"/>
</dbReference>
<dbReference type="InterPro" id="IPR036816">
    <property type="entry name" value="RNaseA-like_dom_sf"/>
</dbReference>
<dbReference type="InterPro" id="IPR023411">
    <property type="entry name" value="RNaseA_AS"/>
</dbReference>
<dbReference type="InterPro" id="IPR023412">
    <property type="entry name" value="RNaseA_domain"/>
</dbReference>
<dbReference type="PANTHER" id="PTHR11437">
    <property type="entry name" value="RIBONUCLEASE"/>
    <property type="match status" value="1"/>
</dbReference>
<dbReference type="PANTHER" id="PTHR11437:SF25">
    <property type="entry name" value="RIBONUCLEASE 8"/>
    <property type="match status" value="1"/>
</dbReference>
<dbReference type="Pfam" id="PF00074">
    <property type="entry name" value="RnaseA"/>
    <property type="match status" value="1"/>
</dbReference>
<dbReference type="PRINTS" id="PR00794">
    <property type="entry name" value="RIBONUCLEASE"/>
</dbReference>
<dbReference type="SMART" id="SM00092">
    <property type="entry name" value="RNAse_Pc"/>
    <property type="match status" value="1"/>
</dbReference>
<dbReference type="SUPFAM" id="SSF54076">
    <property type="entry name" value="RNase A-like"/>
    <property type="match status" value="1"/>
</dbReference>
<dbReference type="PROSITE" id="PS00127">
    <property type="entry name" value="RNASE_PANCREATIC"/>
    <property type="match status" value="1"/>
</dbReference>
<feature type="signal peptide" evidence="2">
    <location>
        <begin position="1"/>
        <end position="27"/>
    </location>
</feature>
<feature type="chain" id="PRO_0000030902" description="Ribonuclease 8">
    <location>
        <begin position="28"/>
        <end position="154"/>
    </location>
</feature>
<feature type="active site" description="Proton acceptor" evidence="1">
    <location>
        <position position="42"/>
    </location>
</feature>
<feature type="active site" description="Proton donor" evidence="1">
    <location>
        <position position="149"/>
    </location>
</feature>
<feature type="binding site" evidence="1">
    <location>
        <begin position="65"/>
        <end position="69"/>
    </location>
    <ligand>
        <name>substrate</name>
    </ligand>
</feature>
<feature type="binding site" evidence="1">
    <location>
        <position position="90"/>
    </location>
    <ligand>
        <name>substrate</name>
    </ligand>
</feature>
<feature type="disulfide bond" evidence="2">
    <location>
        <begin position="50"/>
        <end position="93"/>
    </location>
</feature>
<feature type="disulfide bond" evidence="1">
    <location>
        <begin position="64"/>
        <end position="118"/>
    </location>
</feature>
<feature type="disulfide bond" evidence="1">
    <location>
        <begin position="82"/>
        <end position="133"/>
    </location>
</feature>
<feature type="disulfide bond" evidence="1">
    <location>
        <begin position="89"/>
        <end position="96"/>
    </location>
</feature>
<feature type="sequence variant" id="VAR_052194" description="In dbSNP:rs12437266." evidence="3">
    <original>P</original>
    <variation>S</variation>
    <location>
        <position position="10"/>
    </location>
</feature>
<organism>
    <name type="scientific">Homo sapiens</name>
    <name type="common">Human</name>
    <dbReference type="NCBI Taxonomy" id="9606"/>
    <lineage>
        <taxon>Eukaryota</taxon>
        <taxon>Metazoa</taxon>
        <taxon>Chordata</taxon>
        <taxon>Craniata</taxon>
        <taxon>Vertebrata</taxon>
        <taxon>Euteleostomi</taxon>
        <taxon>Mammalia</taxon>
        <taxon>Eutheria</taxon>
        <taxon>Euarchontoglires</taxon>
        <taxon>Primates</taxon>
        <taxon>Haplorrhini</taxon>
        <taxon>Catarrhini</taxon>
        <taxon>Hominidae</taxon>
        <taxon>Homo</taxon>
    </lineage>
</organism>
<accession>Q8TDE3</accession>
<accession>B2RPP6</accession>
<accession>B2RPP7</accession>
<evidence type="ECO:0000250" key="1"/>
<evidence type="ECO:0000255" key="2"/>
<evidence type="ECO:0000269" key="3">
    <source>
    </source>
</evidence>
<evidence type="ECO:0000305" key="4"/>
<proteinExistence type="evidence at protein level"/>
<sequence length="154" mass="17041">MAPARAGCCPLLLLLLGLWVAEVLVRAKPKDMTSSQWFKTQHVQPSPQACNSAMSIINKYTERCKDLNTFLHEPFSSVAITCQTPNIACKNSCKNCHQSHGPMSLTMGELTSGKYPNCRYKEKHLNTPYIVACDPPQQGDPGYPLVPVHLDKVV</sequence>
<keyword id="KW-1015">Disulfide bond</keyword>
<keyword id="KW-0255">Endonuclease</keyword>
<keyword id="KW-0378">Hydrolase</keyword>
<keyword id="KW-0540">Nuclease</keyword>
<keyword id="KW-1185">Reference proteome</keyword>
<keyword id="KW-0964">Secreted</keyword>
<keyword id="KW-0732">Signal</keyword>
<comment type="function">
    <text>Has a low ribonuclease activity.</text>
</comment>
<comment type="subcellular location">
    <subcellularLocation>
        <location evidence="4">Secreted</location>
    </subcellularLocation>
</comment>
<comment type="tissue specificity">
    <text>Expressed prominently in the placenta and is not detected in any other tissues examined.</text>
</comment>
<comment type="similarity">
    <text evidence="4">Belongs to the pancreatic ribonuclease family.</text>
</comment>
<reference key="1">
    <citation type="journal article" date="2002" name="Nucleic Acids Res.">
        <title>RNase 8, a novel RNase A superfamily ribonuclease expressed uniquely in placenta.</title>
        <authorList>
            <person name="Zhang J."/>
            <person name="Dyer K.D."/>
            <person name="Rosenberg H.F."/>
        </authorList>
    </citation>
    <scope>NUCLEOTIDE SEQUENCE [GENOMIC DNA]</scope>
    <scope>CHARACTERIZATION</scope>
</reference>
<reference key="2">
    <citation type="submission" date="2005-09" db="EMBL/GenBank/DDBJ databases">
        <authorList>
            <person name="Mural R.J."/>
            <person name="Istrail S."/>
            <person name="Sutton G.G."/>
            <person name="Florea L."/>
            <person name="Halpern A.L."/>
            <person name="Mobarry C.M."/>
            <person name="Lippert R."/>
            <person name="Walenz B."/>
            <person name="Shatkay H."/>
            <person name="Dew I."/>
            <person name="Miller J.R."/>
            <person name="Flanigan M.J."/>
            <person name="Edwards N.J."/>
            <person name="Bolanos R."/>
            <person name="Fasulo D."/>
            <person name="Halldorsson B.V."/>
            <person name="Hannenhalli S."/>
            <person name="Turner R."/>
            <person name="Yooseph S."/>
            <person name="Lu F."/>
            <person name="Nusskern D.R."/>
            <person name="Shue B.C."/>
            <person name="Zheng X.H."/>
            <person name="Zhong F."/>
            <person name="Delcher A.L."/>
            <person name="Huson D.H."/>
            <person name="Kravitz S.A."/>
            <person name="Mouchard L."/>
            <person name="Reinert K."/>
            <person name="Remington K.A."/>
            <person name="Clark A.G."/>
            <person name="Waterman M.S."/>
            <person name="Eichler E.E."/>
            <person name="Adams M.D."/>
            <person name="Hunkapiller M.W."/>
            <person name="Myers E.W."/>
            <person name="Venter J.C."/>
        </authorList>
    </citation>
    <scope>NUCLEOTIDE SEQUENCE [LARGE SCALE GENOMIC DNA]</scope>
</reference>
<reference key="3">
    <citation type="journal article" date="2004" name="Genome Res.">
        <title>The status, quality, and expansion of the NIH full-length cDNA project: the Mammalian Gene Collection (MGC).</title>
        <authorList>
            <consortium name="The MGC Project Team"/>
        </authorList>
    </citation>
    <scope>NUCLEOTIDE SEQUENCE [LARGE SCALE MRNA]</scope>
    <scope>VARIANT SER-10</scope>
</reference>
<name>RNAS8_HUMAN</name>